<comment type="function">
    <text evidence="1">Heme chaperone required for the biogenesis of c-type cytochromes. Transiently binds heme delivered by CcmC and transfers the heme to apo-cytochromes in a process facilitated by CcmF and CcmH.</text>
</comment>
<comment type="subcellular location">
    <subcellularLocation>
        <location evidence="1">Cell inner membrane</location>
        <topology evidence="1">Single-pass type II membrane protein</topology>
        <orientation evidence="1">Periplasmic side</orientation>
    </subcellularLocation>
</comment>
<comment type="similarity">
    <text evidence="1">Belongs to the CcmE/CycJ family.</text>
</comment>
<organism>
    <name type="scientific">Anaplasma marginale (strain St. Maries)</name>
    <dbReference type="NCBI Taxonomy" id="234826"/>
    <lineage>
        <taxon>Bacteria</taxon>
        <taxon>Pseudomonadati</taxon>
        <taxon>Pseudomonadota</taxon>
        <taxon>Alphaproteobacteria</taxon>
        <taxon>Rickettsiales</taxon>
        <taxon>Anaplasmataceae</taxon>
        <taxon>Anaplasma</taxon>
    </lineage>
</organism>
<keyword id="KW-0997">Cell inner membrane</keyword>
<keyword id="KW-1003">Cell membrane</keyword>
<keyword id="KW-0201">Cytochrome c-type biogenesis</keyword>
<keyword id="KW-0349">Heme</keyword>
<keyword id="KW-0408">Iron</keyword>
<keyword id="KW-0472">Membrane</keyword>
<keyword id="KW-0479">Metal-binding</keyword>
<keyword id="KW-0735">Signal-anchor</keyword>
<keyword id="KW-0812">Transmembrane</keyword>
<keyword id="KW-1133">Transmembrane helix</keyword>
<dbReference type="EMBL" id="CP000030">
    <property type="protein sequence ID" value="AAV86495.1"/>
    <property type="molecule type" value="Genomic_DNA"/>
</dbReference>
<dbReference type="RefSeq" id="WP_011114279.1">
    <property type="nucleotide sequence ID" value="NZ_AFMU01000053.1"/>
</dbReference>
<dbReference type="SMR" id="Q5PB35"/>
<dbReference type="KEGG" id="ama:AM449"/>
<dbReference type="HOGENOM" id="CLU_079503_1_1_5"/>
<dbReference type="GO" id="GO:0005886">
    <property type="term" value="C:plasma membrane"/>
    <property type="evidence" value="ECO:0007669"/>
    <property type="project" value="UniProtKB-SubCell"/>
</dbReference>
<dbReference type="GO" id="GO:0020037">
    <property type="term" value="F:heme binding"/>
    <property type="evidence" value="ECO:0007669"/>
    <property type="project" value="InterPro"/>
</dbReference>
<dbReference type="GO" id="GO:0046872">
    <property type="term" value="F:metal ion binding"/>
    <property type="evidence" value="ECO:0007669"/>
    <property type="project" value="UniProtKB-KW"/>
</dbReference>
<dbReference type="GO" id="GO:0017004">
    <property type="term" value="P:cytochrome complex assembly"/>
    <property type="evidence" value="ECO:0007669"/>
    <property type="project" value="UniProtKB-KW"/>
</dbReference>
<dbReference type="Gene3D" id="2.40.50.140">
    <property type="entry name" value="Nucleic acid-binding proteins"/>
    <property type="match status" value="1"/>
</dbReference>
<dbReference type="HAMAP" id="MF_01959">
    <property type="entry name" value="CcmE"/>
    <property type="match status" value="1"/>
</dbReference>
<dbReference type="InterPro" id="IPR004329">
    <property type="entry name" value="CcmE"/>
</dbReference>
<dbReference type="InterPro" id="IPR036127">
    <property type="entry name" value="CcmE-like_sf"/>
</dbReference>
<dbReference type="InterPro" id="IPR012340">
    <property type="entry name" value="NA-bd_OB-fold"/>
</dbReference>
<dbReference type="NCBIfam" id="NF009727">
    <property type="entry name" value="PRK13254.1-1"/>
    <property type="match status" value="1"/>
</dbReference>
<dbReference type="PANTHER" id="PTHR34128">
    <property type="entry name" value="CYTOCHROME C-TYPE BIOGENESIS PROTEIN CCME HOMOLOG, MITOCHONDRIAL"/>
    <property type="match status" value="1"/>
</dbReference>
<dbReference type="PANTHER" id="PTHR34128:SF2">
    <property type="entry name" value="CYTOCHROME C-TYPE BIOGENESIS PROTEIN CCME HOMOLOG, MITOCHONDRIAL"/>
    <property type="match status" value="1"/>
</dbReference>
<dbReference type="Pfam" id="PF03100">
    <property type="entry name" value="CcmE"/>
    <property type="match status" value="1"/>
</dbReference>
<dbReference type="SUPFAM" id="SSF82093">
    <property type="entry name" value="Heme chaperone CcmE"/>
    <property type="match status" value="1"/>
</dbReference>
<gene>
    <name evidence="1" type="primary">ccmE</name>
    <name evidence="1" type="synonym">cycJ</name>
    <name type="ordered locus">AM449</name>
</gene>
<protein>
    <recommendedName>
        <fullName evidence="1">Cytochrome c-type biogenesis protein CcmE</fullName>
    </recommendedName>
    <alternativeName>
        <fullName evidence="1">Cytochrome c maturation protein E</fullName>
    </alternativeName>
    <alternativeName>
        <fullName evidence="1">Heme chaperone CcmE</fullName>
    </alternativeName>
</protein>
<name>CCME_ANAMM</name>
<sequence>MKRKHKRLLFVLASFCAAGCALLFILSELRESVSFFYTTSELLSGPQRESNLPVRVGGMVVKGSIARSTDSISFDLTDFKTELNVVYSGMLPPLFGEGVGAVVKGRLLHGKFVADEVLAKHDEKYMPKKYTAPKSSPEPK</sequence>
<proteinExistence type="inferred from homology"/>
<feature type="chain" id="PRO_0000238791" description="Cytochrome c-type biogenesis protein CcmE">
    <location>
        <begin position="1"/>
        <end position="140"/>
    </location>
</feature>
<feature type="topological domain" description="Cytoplasmic" evidence="1">
    <location>
        <begin position="1"/>
        <end position="7"/>
    </location>
</feature>
<feature type="transmembrane region" description="Helical; Signal-anchor for type II membrane protein" evidence="1">
    <location>
        <begin position="8"/>
        <end position="28"/>
    </location>
</feature>
<feature type="topological domain" description="Periplasmic" evidence="1">
    <location>
        <begin position="29"/>
        <end position="140"/>
    </location>
</feature>
<feature type="binding site" description="covalent" evidence="1">
    <location>
        <position position="121"/>
    </location>
    <ligand>
        <name>heme</name>
        <dbReference type="ChEBI" id="CHEBI:30413"/>
    </ligand>
</feature>
<feature type="binding site" description="axial binding residue" evidence="1">
    <location>
        <position position="125"/>
    </location>
    <ligand>
        <name>heme</name>
        <dbReference type="ChEBI" id="CHEBI:30413"/>
    </ligand>
    <ligandPart>
        <name>Fe</name>
        <dbReference type="ChEBI" id="CHEBI:18248"/>
    </ligandPart>
</feature>
<reference key="1">
    <citation type="journal article" date="2005" name="Proc. Natl. Acad. Sci. U.S.A.">
        <title>Complete genome sequencing of Anaplasma marginale reveals that the surface is skewed to two superfamilies of outer membrane proteins.</title>
        <authorList>
            <person name="Brayton K.A."/>
            <person name="Kappmeyer L.S."/>
            <person name="Herndon D.R."/>
            <person name="Dark M.J."/>
            <person name="Tibbals D.L."/>
            <person name="Palmer G.H."/>
            <person name="McGuire T.C."/>
            <person name="Knowles D.P. Jr."/>
        </authorList>
    </citation>
    <scope>NUCLEOTIDE SEQUENCE [LARGE SCALE GENOMIC DNA]</scope>
    <source>
        <strain>St. Maries</strain>
    </source>
</reference>
<accession>Q5PB35</accession>
<evidence type="ECO:0000255" key="1">
    <source>
        <dbReference type="HAMAP-Rule" id="MF_01959"/>
    </source>
</evidence>